<reference key="1">
    <citation type="journal article" date="1994" name="Yeast">
        <title>Analysis of an 11.7 kb DNA fragment of chromosome XI reveals a new tRNA gene and four new open reading frames including a leucine zipper protein and a homologue to the yeast mitochondrial regulator ABF2.</title>
        <authorList>
            <person name="Purnelle B."/>
            <person name="Skala J."/>
            <person name="van Dyck L."/>
            <person name="Goffeau A."/>
        </authorList>
    </citation>
    <scope>NUCLEOTIDE SEQUENCE [GENOMIC DNA]</scope>
    <source>
        <strain>ATCC 204508 / S288c</strain>
    </source>
</reference>
<reference key="2">
    <citation type="journal article" date="1994" name="Nature">
        <title>Complete DNA sequence of yeast chromosome XI.</title>
        <authorList>
            <person name="Dujon B."/>
            <person name="Alexandraki D."/>
            <person name="Andre B."/>
            <person name="Ansorge W."/>
            <person name="Baladron V."/>
            <person name="Ballesta J.P.G."/>
            <person name="Banrevi A."/>
            <person name="Bolle P.-A."/>
            <person name="Bolotin-Fukuhara M."/>
            <person name="Bossier P."/>
            <person name="Bou G."/>
            <person name="Boyer J."/>
            <person name="Buitrago M.J."/>
            <person name="Cheret G."/>
            <person name="Colleaux L."/>
            <person name="Daignan-Fornier B."/>
            <person name="del Rey F."/>
            <person name="Dion C."/>
            <person name="Domdey H."/>
            <person name="Duesterhoeft A."/>
            <person name="Duesterhus S."/>
            <person name="Entian K.-D."/>
            <person name="Erfle H."/>
            <person name="Esteban P.F."/>
            <person name="Feldmann H."/>
            <person name="Fernandes L."/>
            <person name="Fobo G.M."/>
            <person name="Fritz C."/>
            <person name="Fukuhara H."/>
            <person name="Gabel C."/>
            <person name="Gaillon L."/>
            <person name="Garcia-Cantalejo J.M."/>
            <person name="Garcia-Ramirez J.J."/>
            <person name="Gent M.E."/>
            <person name="Ghazvini M."/>
            <person name="Goffeau A."/>
            <person name="Gonzalez A."/>
            <person name="Grothues D."/>
            <person name="Guerreiro P."/>
            <person name="Hegemann J.H."/>
            <person name="Hewitt N."/>
            <person name="Hilger F."/>
            <person name="Hollenberg C.P."/>
            <person name="Horaitis O."/>
            <person name="Indge K.J."/>
            <person name="Jacquier A."/>
            <person name="James C.M."/>
            <person name="Jauniaux J.-C."/>
            <person name="Jimenez A."/>
            <person name="Keuchel H."/>
            <person name="Kirchrath L."/>
            <person name="Kleine K."/>
            <person name="Koetter P."/>
            <person name="Legrain P."/>
            <person name="Liebl S."/>
            <person name="Louis E.J."/>
            <person name="Maia e Silva A."/>
            <person name="Marck C."/>
            <person name="Monnier A.-L."/>
            <person name="Moestl D."/>
            <person name="Mueller S."/>
            <person name="Obermaier B."/>
            <person name="Oliver S.G."/>
            <person name="Pallier C."/>
            <person name="Pascolo S."/>
            <person name="Pfeiffer F."/>
            <person name="Philippsen P."/>
            <person name="Planta R.J."/>
            <person name="Pohl F.M."/>
            <person name="Pohl T.M."/>
            <person name="Poehlmann R."/>
            <person name="Portetelle D."/>
            <person name="Purnelle B."/>
            <person name="Puzos V."/>
            <person name="Ramezani Rad M."/>
            <person name="Rasmussen S.W."/>
            <person name="Remacha M.A."/>
            <person name="Revuelta J.L."/>
            <person name="Richard G.-F."/>
            <person name="Rieger M."/>
            <person name="Rodrigues-Pousada C."/>
            <person name="Rose M."/>
            <person name="Rupp T."/>
            <person name="Santos M.A."/>
            <person name="Schwager C."/>
            <person name="Sensen C."/>
            <person name="Skala J."/>
            <person name="Soares H."/>
            <person name="Sor F."/>
            <person name="Stegemann J."/>
            <person name="Tettelin H."/>
            <person name="Thierry A."/>
            <person name="Tzermia M."/>
            <person name="Urrestarazu L.A."/>
            <person name="van Dyck L."/>
            <person name="van Vliet-Reedijk J.C."/>
            <person name="Valens M."/>
            <person name="Vandenbol M."/>
            <person name="Vilela C."/>
            <person name="Vissers S."/>
            <person name="von Wettstein D."/>
            <person name="Voss H."/>
            <person name="Wiemann S."/>
            <person name="Xu G."/>
            <person name="Zimmermann J."/>
            <person name="Haasemann M."/>
            <person name="Becker I."/>
            <person name="Mewes H.-W."/>
        </authorList>
    </citation>
    <scope>NUCLEOTIDE SEQUENCE [LARGE SCALE GENOMIC DNA]</scope>
    <source>
        <strain>ATCC 204508 / S288c</strain>
    </source>
</reference>
<reference key="3">
    <citation type="journal article" date="2014" name="G3 (Bethesda)">
        <title>The reference genome sequence of Saccharomyces cerevisiae: Then and now.</title>
        <authorList>
            <person name="Engel S.R."/>
            <person name="Dietrich F.S."/>
            <person name="Fisk D.G."/>
            <person name="Binkley G."/>
            <person name="Balakrishnan R."/>
            <person name="Costanzo M.C."/>
            <person name="Dwight S.S."/>
            <person name="Hitz B.C."/>
            <person name="Karra K."/>
            <person name="Nash R.S."/>
            <person name="Weng S."/>
            <person name="Wong E.D."/>
            <person name="Lloyd P."/>
            <person name="Skrzypek M.S."/>
            <person name="Miyasato S.R."/>
            <person name="Simison M."/>
            <person name="Cherry J.M."/>
        </authorList>
    </citation>
    <scope>GENOME REANNOTATION</scope>
    <source>
        <strain>ATCC 204508 / S288c</strain>
    </source>
</reference>
<reference key="4">
    <citation type="journal article" date="2003" name="Genome Biol.">
        <title>Reinvestigation of the Saccharomyces cerevisiae genome annotation by comparison to the genome of a related fungus: Ashbya gossypii.</title>
        <authorList>
            <person name="Brachat S."/>
            <person name="Dietrich F.S."/>
            <person name="Voegeli S."/>
            <person name="Zhang Z."/>
            <person name="Stuart L."/>
            <person name="Lerch A."/>
            <person name="Gates K."/>
            <person name="Gaffney T.D."/>
            <person name="Philippsen P."/>
        </authorList>
    </citation>
    <scope>NUCLEOTIDE SEQUENCE [GENOMIC DNA] OF 26-98</scope>
    <source>
        <strain>ATCC 204511 / S288c / AB972</strain>
    </source>
</reference>
<reference key="5">
    <citation type="journal article" date="2015" name="J. Biol. Chem.">
        <title>Functional diversity of haloacid dehalogenase superfamily phosphatases from Saccharomyces cerevisiae: Biochemical, structural, and evolutionary insights.</title>
        <authorList>
            <person name="Kuznetsova E."/>
            <person name="Nocek B."/>
            <person name="Brown G."/>
            <person name="Makarova K.S."/>
            <person name="Flick R."/>
            <person name="Wolf Y.I."/>
            <person name="Khusnutdinova A."/>
            <person name="Evdokimova E."/>
            <person name="Jin K."/>
            <person name="Tan K."/>
            <person name="Hanson A.D."/>
            <person name="Hasnain G."/>
            <person name="Zallot R."/>
            <person name="de Crecy-Lagard V."/>
            <person name="Babu M."/>
            <person name="Savchenko A."/>
            <person name="Joachimiak A."/>
            <person name="Edwards A.M."/>
            <person name="Koonin E.V."/>
            <person name="Yakunin A.F."/>
        </authorList>
    </citation>
    <scope>FUNCTION</scope>
    <scope>CATALYTIC ACTIVITY</scope>
    <scope>BIOPHYSICOCHEMICAL PROPERTIES</scope>
</reference>
<reference key="6">
    <citation type="journal article" date="2018" name="J. Proteome Res.">
        <title>Enrichment-based proteogenomics identifies microproteins, missing proteins, and novel smORFs in Saccharomyces cerevisiae.</title>
        <authorList>
            <person name="He C."/>
            <person name="Jia C."/>
            <person name="Zhang Y."/>
            <person name="Xu P."/>
        </authorList>
    </citation>
    <scope>IDENTIFICATION BY MASS SPECTROMETRY</scope>
</reference>
<name>YKD3A_YEAST</name>
<keyword id="KW-0378">Hydrolase</keyword>
<keyword id="KW-1185">Reference proteome</keyword>
<dbReference type="EC" id="3.1.3.96" evidence="3"/>
<dbReference type="EMBL" id="X71622">
    <property type="status" value="NOT_ANNOTATED_CDS"/>
    <property type="molecule type" value="Genomic_DNA"/>
</dbReference>
<dbReference type="EMBL" id="Z28033">
    <property type="status" value="NOT_ANNOTATED_CDS"/>
    <property type="molecule type" value="Genomic_DNA"/>
</dbReference>
<dbReference type="EMBL" id="AY260896">
    <property type="protein sequence ID" value="AAP21764.1"/>
    <property type="molecule type" value="Genomic_DNA"/>
</dbReference>
<dbReference type="EMBL" id="BK006944">
    <property type="protein sequence ID" value="DAA09122.1"/>
    <property type="molecule type" value="Genomic_DNA"/>
</dbReference>
<dbReference type="RefSeq" id="NP_012891.4">
    <property type="nucleotide sequence ID" value="NM_001184335.3"/>
</dbReference>
<dbReference type="SMR" id="Q86ZR7"/>
<dbReference type="BioGRID" id="34098">
    <property type="interactions" value="71"/>
</dbReference>
<dbReference type="FunCoup" id="Q86ZR7">
    <property type="interactions" value="276"/>
</dbReference>
<dbReference type="IntAct" id="Q86ZR7">
    <property type="interactions" value="2"/>
</dbReference>
<dbReference type="STRING" id="4932.YKL033W-A"/>
<dbReference type="iPTMnet" id="Q86ZR7"/>
<dbReference type="PaxDb" id="4932-YKL033W-A"/>
<dbReference type="PeptideAtlas" id="Q86ZR7"/>
<dbReference type="EnsemblFungi" id="YKL033W-A_mRNA">
    <property type="protein sequence ID" value="YKL033W-A"/>
    <property type="gene ID" value="YKL033W-A"/>
</dbReference>
<dbReference type="GeneID" id="853833"/>
<dbReference type="KEGG" id="sce:YKL033W-A"/>
<dbReference type="AGR" id="SGD:S000007242"/>
<dbReference type="SGD" id="S000007242">
    <property type="gene designation" value="YKL033W-A"/>
</dbReference>
<dbReference type="VEuPathDB" id="FungiDB:YKL033W-A"/>
<dbReference type="eggNOG" id="KOG2914">
    <property type="taxonomic scope" value="Eukaryota"/>
</dbReference>
<dbReference type="GeneTree" id="ENSGT00390000014753"/>
<dbReference type="HOGENOM" id="CLU_045011_13_0_1"/>
<dbReference type="InParanoid" id="Q86ZR7"/>
<dbReference type="OMA" id="FHHMVMG"/>
<dbReference type="OrthoDB" id="40579at2759"/>
<dbReference type="BioCyc" id="YEAST:G3O-32091-MONOMER"/>
<dbReference type="Reactome" id="R-SCE-73614">
    <property type="pathway name" value="Pyrimidine salvage"/>
</dbReference>
<dbReference type="BioGRID-ORCS" id="853833">
    <property type="hits" value="1 hit in 10 CRISPR screens"/>
</dbReference>
<dbReference type="CD-CODE" id="E03F929F">
    <property type="entry name" value="Stress granule"/>
</dbReference>
<dbReference type="PRO" id="PR:Q86ZR7"/>
<dbReference type="Proteomes" id="UP000002311">
    <property type="component" value="Chromosome XI"/>
</dbReference>
<dbReference type="RNAct" id="Q86ZR7">
    <property type="molecule type" value="protein"/>
</dbReference>
<dbReference type="GO" id="GO:0008253">
    <property type="term" value="F:5'-nucleotidase activity"/>
    <property type="evidence" value="ECO:0000314"/>
    <property type="project" value="SGD"/>
</dbReference>
<dbReference type="GO" id="GO:0016791">
    <property type="term" value="F:phosphatase activity"/>
    <property type="evidence" value="ECO:0000318"/>
    <property type="project" value="GO_Central"/>
</dbReference>
<dbReference type="GO" id="GO:1990738">
    <property type="term" value="F:pseudouridine 5'-phosphatase activity"/>
    <property type="evidence" value="ECO:0000314"/>
    <property type="project" value="SGD"/>
</dbReference>
<dbReference type="GO" id="GO:0106411">
    <property type="term" value="F:XMP 5'-nucleosidase activity"/>
    <property type="evidence" value="ECO:0007669"/>
    <property type="project" value="RHEA"/>
</dbReference>
<dbReference type="CDD" id="cd07529">
    <property type="entry name" value="HAD_AtGPP-like"/>
    <property type="match status" value="1"/>
</dbReference>
<dbReference type="FunFam" id="1.10.150.240:FF:000001">
    <property type="entry name" value="Haloacid dehalogenase-like hydrolase domain"/>
    <property type="match status" value="1"/>
</dbReference>
<dbReference type="Gene3D" id="3.40.50.1000">
    <property type="entry name" value="HAD superfamily/HAD-like"/>
    <property type="match status" value="1"/>
</dbReference>
<dbReference type="Gene3D" id="1.10.150.240">
    <property type="entry name" value="Putative phosphatase, domain 2"/>
    <property type="match status" value="1"/>
</dbReference>
<dbReference type="InterPro" id="IPR045228">
    <property type="entry name" value="Gpp1/Gpp2-like"/>
</dbReference>
<dbReference type="InterPro" id="IPR036412">
    <property type="entry name" value="HAD-like_sf"/>
</dbReference>
<dbReference type="InterPro" id="IPR006439">
    <property type="entry name" value="HAD-SF_hydro_IA"/>
</dbReference>
<dbReference type="InterPro" id="IPR041492">
    <property type="entry name" value="HAD_2"/>
</dbReference>
<dbReference type="InterPro" id="IPR023214">
    <property type="entry name" value="HAD_sf"/>
</dbReference>
<dbReference type="InterPro" id="IPR023198">
    <property type="entry name" value="PGP-like_dom2"/>
</dbReference>
<dbReference type="NCBIfam" id="TIGR01509">
    <property type="entry name" value="HAD-SF-IA-v3"/>
    <property type="match status" value="1"/>
</dbReference>
<dbReference type="PANTHER" id="PTHR18901">
    <property type="entry name" value="2-DEOXYGLUCOSE-6-PHOSPHATE PHOSPHATASE 2"/>
    <property type="match status" value="1"/>
</dbReference>
<dbReference type="PANTHER" id="PTHR18901:SF38">
    <property type="entry name" value="PSEUDOURIDINE-5'-PHOSPHATASE"/>
    <property type="match status" value="1"/>
</dbReference>
<dbReference type="Pfam" id="PF13419">
    <property type="entry name" value="HAD_2"/>
    <property type="match status" value="1"/>
</dbReference>
<dbReference type="SFLD" id="SFLDG01129">
    <property type="entry name" value="C1.5:_HAD__Beta-PGM__Phosphata"/>
    <property type="match status" value="1"/>
</dbReference>
<dbReference type="SFLD" id="SFLDS00003">
    <property type="entry name" value="Haloacid_Dehalogenase"/>
    <property type="match status" value="1"/>
</dbReference>
<dbReference type="SUPFAM" id="SSF56784">
    <property type="entry name" value="HAD-like"/>
    <property type="match status" value="1"/>
</dbReference>
<proteinExistence type="evidence at protein level"/>
<protein>
    <recommendedName>
        <fullName evidence="2">Probable pseudouridine-5'-phosphatase YKL033W-A</fullName>
        <ecNumber evidence="3">3.1.3.96</ecNumber>
    </recommendedName>
</protein>
<organism>
    <name type="scientific">Saccharomyces cerevisiae (strain ATCC 204508 / S288c)</name>
    <name type="common">Baker's yeast</name>
    <dbReference type="NCBI Taxonomy" id="559292"/>
    <lineage>
        <taxon>Eukaryota</taxon>
        <taxon>Fungi</taxon>
        <taxon>Dikarya</taxon>
        <taxon>Ascomycota</taxon>
        <taxon>Saccharomycotina</taxon>
        <taxon>Saccharomycetes</taxon>
        <taxon>Saccharomycetales</taxon>
        <taxon>Saccharomycetaceae</taxon>
        <taxon>Saccharomyces</taxon>
    </lineage>
</organism>
<evidence type="ECO:0000269" key="1">
    <source>
    </source>
</evidence>
<evidence type="ECO:0000305" key="2"/>
<evidence type="ECO:0000305" key="3">
    <source>
    </source>
</evidence>
<evidence type="ECO:0000312" key="4">
    <source>
        <dbReference type="SGD" id="S000007242"/>
    </source>
</evidence>
<sequence length="236" mass="26170">MTHPVAVKACLFDMDGLLINTEDIYTETLNETLAEFGKGPLTWDVKIKLQGLPGPEAGKRVIEHYKLPITLDEYDERNVALQSLKWGTCEFLPGALNLLKYLKLKNIPIALCTSSNKTKFRGKTSHLEEGFDLFDTIVTGDDPRIAKGRGKPFPDIWQLGLKELNEKFHTDIKPDECIVFEDGIPGVKSAKAFGAHVIWVPHPEAHAVLGDTEALLAGKGELLSSLEKLEMSKYGL</sequence>
<gene>
    <name evidence="4" type="ordered locus">YKL033W-A</name>
</gene>
<comment type="function">
    <text evidence="1">Nucleotidase with XMP as the best in vitro substrate. Low catalytic efficiencies of YKL033W-A observed with XMP and other substrates suggest that these could be secondary activities for this protein, and its primary substrate is not yet identified. May possess pseudouridine 5'-phosphatase activity and together with dTTP/UTP pyrophosphatase YOR111W might constitute a pathway for the detoxification of pseudouridine 5'-triphosphate (Psi-UTP) and -monophosphate (Psi-UMP).</text>
</comment>
<comment type="catalytic activity">
    <reaction evidence="3">
        <text>XMP + H2O = xanthosine + phosphate</text>
        <dbReference type="Rhea" id="RHEA:28530"/>
        <dbReference type="ChEBI" id="CHEBI:15377"/>
        <dbReference type="ChEBI" id="CHEBI:18107"/>
        <dbReference type="ChEBI" id="CHEBI:43474"/>
        <dbReference type="ChEBI" id="CHEBI:57464"/>
    </reaction>
    <physiologicalReaction direction="left-to-right" evidence="3">
        <dbReference type="Rhea" id="RHEA:28531"/>
    </physiologicalReaction>
</comment>
<comment type="catalytic activity">
    <reaction evidence="3">
        <text>psi-UMP + H2O = pseudouridine + phosphate</text>
        <dbReference type="Rhea" id="RHEA:10944"/>
        <dbReference type="ChEBI" id="CHEBI:15377"/>
        <dbReference type="ChEBI" id="CHEBI:17802"/>
        <dbReference type="ChEBI" id="CHEBI:43474"/>
        <dbReference type="ChEBI" id="CHEBI:58380"/>
        <dbReference type="EC" id="3.1.3.96"/>
    </reaction>
    <physiologicalReaction direction="left-to-right" evidence="1">
        <dbReference type="Rhea" id="RHEA:10945"/>
    </physiologicalReaction>
</comment>
<comment type="biophysicochemical properties">
    <kinetics>
        <KM evidence="1">1.26 mM for XMP</KM>
        <text evidence="1">kcat is 1.9 sec(-1) with XMP as substrate.</text>
    </kinetics>
</comment>
<comment type="similarity">
    <text evidence="2">Belongs to the HAD-like hydrolase superfamily.</text>
</comment>
<comment type="sequence caution" evidence="2">
    <conflict type="frameshift">
        <sequence resource="EMBL" id="Z28033"/>
    </conflict>
</comment>
<accession>Q86ZR7</accession>
<accession>D6VXQ2</accession>
<feature type="chain" id="PRO_0000203186" description="Probable pseudouridine-5'-phosphatase YKL033W-A">
    <location>
        <begin position="1"/>
        <end position="236"/>
    </location>
</feature>